<evidence type="ECO:0000250" key="1">
    <source>
        <dbReference type="UniProtKB" id="P04798"/>
    </source>
</evidence>
<evidence type="ECO:0000250" key="2">
    <source>
        <dbReference type="UniProtKB" id="Q12053"/>
    </source>
</evidence>
<evidence type="ECO:0000269" key="3">
    <source>
    </source>
</evidence>
<evidence type="ECO:0000269" key="4">
    <source>
    </source>
</evidence>
<evidence type="ECO:0000269" key="5">
    <source>
    </source>
</evidence>
<evidence type="ECO:0000269" key="6">
    <source>
    </source>
</evidence>
<evidence type="ECO:0000269" key="7">
    <source>
    </source>
</evidence>
<evidence type="ECO:0000269" key="8">
    <source>
    </source>
</evidence>
<evidence type="ECO:0000269" key="9">
    <source>
    </source>
</evidence>
<evidence type="ECO:0000269" key="10">
    <source>
    </source>
</evidence>
<evidence type="ECO:0000303" key="11">
    <source>
    </source>
</evidence>
<evidence type="ECO:0000303" key="12">
    <source>
    </source>
</evidence>
<evidence type="ECO:0000305" key="13"/>
<evidence type="ECO:0000305" key="14">
    <source>
    </source>
</evidence>
<evidence type="ECO:0000305" key="15">
    <source>
    </source>
</evidence>
<reference key="1">
    <citation type="journal article" date="1996" name="Proc. Natl. Acad. Sci. U.S.A.">
        <title>Twenty-five coregulated transcripts define a sterigmatocystin gene cluster in Aspergillus nidulans.</title>
        <authorList>
            <person name="Brown D.W."/>
            <person name="Yu J.-H."/>
            <person name="Kelkar H.S."/>
            <person name="Fernandes M."/>
            <person name="Nesbitt T.C."/>
            <person name="Keller N.P."/>
            <person name="Adams T.H."/>
            <person name="Leonard T.J."/>
        </authorList>
    </citation>
    <scope>NUCLEOTIDE SEQUENCE [GENOMIC DNA]</scope>
    <scope>INDUCTION</scope>
    <scope>FUNCTION</scope>
    <scope>PATHWAY</scope>
    <source>
        <strain>FGSC 26</strain>
    </source>
</reference>
<reference key="2">
    <citation type="journal article" date="2005" name="Nature">
        <title>Sequencing of Aspergillus nidulans and comparative analysis with A. fumigatus and A. oryzae.</title>
        <authorList>
            <person name="Galagan J.E."/>
            <person name="Calvo S.E."/>
            <person name="Cuomo C."/>
            <person name="Ma L.-J."/>
            <person name="Wortman J.R."/>
            <person name="Batzoglou S."/>
            <person name="Lee S.-I."/>
            <person name="Bastuerkmen M."/>
            <person name="Spevak C.C."/>
            <person name="Clutterbuck J."/>
            <person name="Kapitonov V."/>
            <person name="Jurka J."/>
            <person name="Scazzocchio C."/>
            <person name="Farman M.L."/>
            <person name="Butler J."/>
            <person name="Purcell S."/>
            <person name="Harris S."/>
            <person name="Braus G.H."/>
            <person name="Draht O."/>
            <person name="Busch S."/>
            <person name="D'Enfert C."/>
            <person name="Bouchier C."/>
            <person name="Goldman G.H."/>
            <person name="Bell-Pedersen D."/>
            <person name="Griffiths-Jones S."/>
            <person name="Doonan J.H."/>
            <person name="Yu J."/>
            <person name="Vienken K."/>
            <person name="Pain A."/>
            <person name="Freitag M."/>
            <person name="Selker E.U."/>
            <person name="Archer D.B."/>
            <person name="Penalva M.A."/>
            <person name="Oakley B.R."/>
            <person name="Momany M."/>
            <person name="Tanaka T."/>
            <person name="Kumagai T."/>
            <person name="Asai K."/>
            <person name="Machida M."/>
            <person name="Nierman W.C."/>
            <person name="Denning D.W."/>
            <person name="Caddick M.X."/>
            <person name="Hynes M."/>
            <person name="Paoletti M."/>
            <person name="Fischer R."/>
            <person name="Miller B.L."/>
            <person name="Dyer P.S."/>
            <person name="Sachs M.S."/>
            <person name="Osmani S.A."/>
            <person name="Birren B.W."/>
        </authorList>
    </citation>
    <scope>NUCLEOTIDE SEQUENCE [LARGE SCALE GENOMIC DNA]</scope>
    <source>
        <strain>FGSC A4 / ATCC 38163 / CBS 112.46 / NRRL 194 / M139</strain>
    </source>
</reference>
<reference key="3">
    <citation type="journal article" date="2009" name="Fungal Genet. Biol.">
        <title>The 2008 update of the Aspergillus nidulans genome annotation: a community effort.</title>
        <authorList>
            <person name="Wortman J.R."/>
            <person name="Gilsenan J.M."/>
            <person name="Joardar V."/>
            <person name="Deegan J."/>
            <person name="Clutterbuck J."/>
            <person name="Andersen M.R."/>
            <person name="Archer D."/>
            <person name="Bencina M."/>
            <person name="Braus G."/>
            <person name="Coutinho P."/>
            <person name="von Dohren H."/>
            <person name="Doonan J."/>
            <person name="Driessen A.J."/>
            <person name="Durek P."/>
            <person name="Espeso E."/>
            <person name="Fekete E."/>
            <person name="Flipphi M."/>
            <person name="Estrada C.G."/>
            <person name="Geysens S."/>
            <person name="Goldman G."/>
            <person name="de Groot P.W."/>
            <person name="Hansen K."/>
            <person name="Harris S.D."/>
            <person name="Heinekamp T."/>
            <person name="Helmstaedt K."/>
            <person name="Henrissat B."/>
            <person name="Hofmann G."/>
            <person name="Homan T."/>
            <person name="Horio T."/>
            <person name="Horiuchi H."/>
            <person name="James S."/>
            <person name="Jones M."/>
            <person name="Karaffa L."/>
            <person name="Karanyi Z."/>
            <person name="Kato M."/>
            <person name="Keller N."/>
            <person name="Kelly D.E."/>
            <person name="Kiel J.A."/>
            <person name="Kim J.M."/>
            <person name="van der Klei I.J."/>
            <person name="Klis F.M."/>
            <person name="Kovalchuk A."/>
            <person name="Krasevec N."/>
            <person name="Kubicek C.P."/>
            <person name="Liu B."/>
            <person name="Maccabe A."/>
            <person name="Meyer V."/>
            <person name="Mirabito P."/>
            <person name="Miskei M."/>
            <person name="Mos M."/>
            <person name="Mullins J."/>
            <person name="Nelson D.R."/>
            <person name="Nielsen J."/>
            <person name="Oakley B.R."/>
            <person name="Osmani S.A."/>
            <person name="Pakula T."/>
            <person name="Paszewski A."/>
            <person name="Paulsen I."/>
            <person name="Pilsyk S."/>
            <person name="Pocsi I."/>
            <person name="Punt P.J."/>
            <person name="Ram A.F."/>
            <person name="Ren Q."/>
            <person name="Robellet X."/>
            <person name="Robson G."/>
            <person name="Seiboth B."/>
            <person name="van Solingen P."/>
            <person name="Specht T."/>
            <person name="Sun J."/>
            <person name="Taheri-Talesh N."/>
            <person name="Takeshita N."/>
            <person name="Ussery D."/>
            <person name="vanKuyk P.A."/>
            <person name="Visser H."/>
            <person name="van de Vondervoort P.J."/>
            <person name="de Vries R.P."/>
            <person name="Walton J."/>
            <person name="Xiang X."/>
            <person name="Xiong Y."/>
            <person name="Zeng A.P."/>
            <person name="Brandt B.W."/>
            <person name="Cornell M.J."/>
            <person name="van den Hondel C.A."/>
            <person name="Visser J."/>
            <person name="Oliver S.G."/>
            <person name="Turner G."/>
        </authorList>
    </citation>
    <scope>GENOME REANNOTATION</scope>
    <source>
        <strain>FGSC A4 / ATCC 38163 / CBS 112.46 / NRRL 194 / M139</strain>
    </source>
</reference>
<reference key="4">
    <citation type="journal article" date="1994" name="Appl. Environ. Microbiol.">
        <title>Aspergillus nidulans verA is required for production of the mycotoxin sterigmatocystin.</title>
        <authorList>
            <person name="Keller N.P."/>
            <person name="Kantz N.J."/>
            <person name="Adams T.H."/>
        </authorList>
    </citation>
    <scope>FUNCTION</scope>
    <scope>INDUCTION</scope>
</reference>
<reference key="5">
    <citation type="journal article" date="1995" name="Appl. Environ. Microbiol.">
        <title>StcS, a putative P-450 monooxygenase, is required for the conversion of versicolorin A to sterigmatocystin in Aspergillus nidulans.</title>
        <authorList>
            <person name="Keller N.P."/>
            <person name="Segner S."/>
            <person name="Bhatnagar D."/>
            <person name="Adams T.H."/>
        </authorList>
    </citation>
    <scope>FUNCTION</scope>
</reference>
<reference key="6">
    <citation type="journal article" date="1995" name="J. Bacteriol.">
        <title>Sterigmatocystin biosynthesis in Aspergillus nidulans requires a novel type I polyketide synthase.</title>
        <authorList>
            <person name="Yu J.-H."/>
            <person name="Leonard T.J."/>
        </authorList>
    </citation>
    <scope>FUNCTION</scope>
    <source>
        <strain>FGSC A4 / ATCC 38163 / CBS 112.46 / NRRL 194 / M139</strain>
    </source>
</reference>
<reference key="7">
    <citation type="journal article" date="1996" name="Appl. Environ. Microbiol.">
        <title>Aspergillus nidulans stcP encodes an O-methyltransferase that is required for sterigmatocystin biosynthesis.</title>
        <authorList>
            <person name="Kelkar H.S."/>
            <person name="Keller N.P."/>
            <person name="Adams T.H."/>
        </authorList>
    </citation>
    <scope>FUNCTION</scope>
</reference>
<reference key="8">
    <citation type="journal article" date="1996" name="Proc. Natl. Acad. Sci. U.S.A.">
        <title>Aspergillus has distinct fatty acid synthases for primary and secondary metabolism.</title>
        <authorList>
            <person name="Brown D.W."/>
            <person name="Adams T.H."/>
            <person name="Keller N.P."/>
        </authorList>
    </citation>
    <scope>FUNCTION</scope>
</reference>
<reference key="9">
    <citation type="journal article" date="1997" name="J. Biol. Chem.">
        <title>Aspergillus nidulans stcL encodes a putative cytochrome P-450 monooxygenase required for bisfuran desaturation during aflatoxin/sterigmatocystin biosynthesis.</title>
        <authorList>
            <person name="Kelkar H.S."/>
            <person name="Skloss T.W."/>
            <person name="Haw J.F."/>
            <person name="Keller N.P."/>
            <person name="Adams T.H."/>
        </authorList>
    </citation>
    <scope>FUNCTION</scope>
</reference>
<reference key="10">
    <citation type="journal article" date="1998" name="Mol. Microbiol.">
        <title>Sequence-specific binding by Aspergillus nidulans aflR, a C6 zinc cluster protein regulating mycotoxin biosynthesis.</title>
        <authorList>
            <person name="Fernandes M."/>
            <person name="Keller N.P."/>
            <person name="Adams T.H."/>
        </authorList>
    </citation>
    <scope>INDUCTION</scope>
</reference>
<reference key="11">
    <citation type="journal article" date="2000" name="Appl. Environ. Microbiol.">
        <title>Requirement of monooxygenase-mediated steps for sterigmatocystin biosynthesis by Aspergillus nidulans.</title>
        <authorList>
            <person name="Keller N.P."/>
            <person name="Watanabe C.M."/>
            <person name="Kelkar H.S."/>
            <person name="Adams T.H."/>
            <person name="Townsend C.A."/>
        </authorList>
    </citation>
    <scope>FUNCTION</scope>
    <scope>DISRUPTION PHENOTYPE</scope>
    <scope>PATHWAY</scope>
</reference>
<reference key="12">
    <citation type="journal article" date="2012" name="Metabolites">
        <title>Genetics of polyketide metabolism in Aspergillus nidulans.</title>
        <authorList>
            <person name="Klejnstrup M.L."/>
            <person name="Frandsen R.J."/>
            <person name="Holm D.K."/>
            <person name="Nielsen M.T."/>
            <person name="Mortensen U.H."/>
            <person name="Larsen T.O."/>
            <person name="Nielsen J.B."/>
        </authorList>
    </citation>
    <scope>REVIEW ON STERIGMATOCYSTIN BIOSYNTHESIS</scope>
</reference>
<sequence>MISQICNEVIGLVPKKEEPGWLSVTGHPGAVYCENSISSGPEATGADVSQAIRIAYFTPLKHIPGPWYASLTGLRLSWSVFANNRIHYVHSLHQKYGPIVRIGPQEIDVADPVAGREIHRMGSGFMKAPFYELLSPGPVDNIFNFRDPKLHAARRKLYARGFTLQSLRNEWEPKVRDIIKLTVEKIKCDAVKGEAEIMGWWTLMANEIVCQLTFGGGAGIVAKGVKEPFVLMLERRMGDLAHLLKHFAPPGYYLGRALAWFIPPLQDIFYSQERMFAAGGDVVSRAREAKKAQAEPRNLFNKALEAGNLTDTDIITDAGALLLAGSDPTAISLTFLLWCVLSRPEVQKQVEAEVATLEGELTDEACERLPILNAVIDESLRLYGAAPGCMPRSPPSGGVTIGGYFIPDDTIVATQNWSLQRNPSIWDDADTFDHTRWLSNSRITDQAKLAFNPFGYGARQCLGIHLGRMEMRLAAAMFFRECVGARLGRSVTDESMHVVDSFIAGVPRDRRCAITLT</sequence>
<dbReference type="EC" id="1.14.-.-" evidence="14"/>
<dbReference type="EMBL" id="U34740">
    <property type="protein sequence ID" value="AAC49192.1"/>
    <property type="status" value="ALT_SEQ"/>
    <property type="molecule type" value="Genomic_DNA"/>
</dbReference>
<dbReference type="EMBL" id="AACD01000132">
    <property type="protein sequence ID" value="EAA61612.1"/>
    <property type="molecule type" value="Genomic_DNA"/>
</dbReference>
<dbReference type="EMBL" id="BN001304">
    <property type="protein sequence ID" value="CBF80182.1"/>
    <property type="molecule type" value="Genomic_DNA"/>
</dbReference>
<dbReference type="RefSeq" id="XP_681093.1">
    <property type="nucleotide sequence ID" value="XM_676001.1"/>
</dbReference>
<dbReference type="SMR" id="Q12608"/>
<dbReference type="STRING" id="227321.Q12608"/>
<dbReference type="EnsemblFungi" id="CBF80182">
    <property type="protein sequence ID" value="CBF80182"/>
    <property type="gene ID" value="ANIA_07824"/>
</dbReference>
<dbReference type="KEGG" id="ani:ANIA_07824"/>
<dbReference type="eggNOG" id="KOG0157">
    <property type="taxonomic scope" value="Eukaryota"/>
</dbReference>
<dbReference type="HOGENOM" id="CLU_001570_14_2_1"/>
<dbReference type="InParanoid" id="Q12608"/>
<dbReference type="OMA" id="WTLMANE"/>
<dbReference type="OrthoDB" id="1470350at2759"/>
<dbReference type="UniPathway" id="UPA00377"/>
<dbReference type="Proteomes" id="UP000000560">
    <property type="component" value="Chromosome IV"/>
</dbReference>
<dbReference type="GO" id="GO:0020037">
    <property type="term" value="F:heme binding"/>
    <property type="evidence" value="ECO:0007669"/>
    <property type="project" value="InterPro"/>
</dbReference>
<dbReference type="GO" id="GO:0005506">
    <property type="term" value="F:iron ion binding"/>
    <property type="evidence" value="ECO:0007669"/>
    <property type="project" value="InterPro"/>
</dbReference>
<dbReference type="GO" id="GO:0004497">
    <property type="term" value="F:monooxygenase activity"/>
    <property type="evidence" value="ECO:0007669"/>
    <property type="project" value="UniProtKB-KW"/>
</dbReference>
<dbReference type="GO" id="GO:0016705">
    <property type="term" value="F:oxidoreductase activity, acting on paired donors, with incorporation or reduction of molecular oxygen"/>
    <property type="evidence" value="ECO:0007669"/>
    <property type="project" value="InterPro"/>
</dbReference>
<dbReference type="GO" id="GO:0045461">
    <property type="term" value="P:sterigmatocystin biosynthetic process"/>
    <property type="evidence" value="ECO:0000315"/>
    <property type="project" value="GO_Central"/>
</dbReference>
<dbReference type="CDD" id="cd11059">
    <property type="entry name" value="CYP_fungal"/>
    <property type="match status" value="1"/>
</dbReference>
<dbReference type="FunFam" id="1.10.630.10:FF:000093">
    <property type="entry name" value="Cytochrome P450 monooxygenase"/>
    <property type="match status" value="1"/>
</dbReference>
<dbReference type="Gene3D" id="1.10.630.10">
    <property type="entry name" value="Cytochrome P450"/>
    <property type="match status" value="1"/>
</dbReference>
<dbReference type="InterPro" id="IPR001128">
    <property type="entry name" value="Cyt_P450"/>
</dbReference>
<dbReference type="InterPro" id="IPR017972">
    <property type="entry name" value="Cyt_P450_CS"/>
</dbReference>
<dbReference type="InterPro" id="IPR002401">
    <property type="entry name" value="Cyt_P450_E_grp-I"/>
</dbReference>
<dbReference type="InterPro" id="IPR036396">
    <property type="entry name" value="Cyt_P450_sf"/>
</dbReference>
<dbReference type="InterPro" id="IPR050121">
    <property type="entry name" value="Cytochrome_P450_monoxygenase"/>
</dbReference>
<dbReference type="PANTHER" id="PTHR24305">
    <property type="entry name" value="CYTOCHROME P450"/>
    <property type="match status" value="1"/>
</dbReference>
<dbReference type="PANTHER" id="PTHR24305:SF96">
    <property type="entry name" value="CYTOCHROME P450 MONOOXYGENASE STCB-RELATED"/>
    <property type="match status" value="1"/>
</dbReference>
<dbReference type="Pfam" id="PF00067">
    <property type="entry name" value="p450"/>
    <property type="match status" value="1"/>
</dbReference>
<dbReference type="PRINTS" id="PR00463">
    <property type="entry name" value="EP450I"/>
</dbReference>
<dbReference type="PRINTS" id="PR00385">
    <property type="entry name" value="P450"/>
</dbReference>
<dbReference type="SUPFAM" id="SSF48264">
    <property type="entry name" value="Cytochrome P450"/>
    <property type="match status" value="1"/>
</dbReference>
<dbReference type="PROSITE" id="PS00086">
    <property type="entry name" value="CYTOCHROME_P450"/>
    <property type="match status" value="1"/>
</dbReference>
<comment type="function">
    <text evidence="2 3 4 6 7 8 9 11 15">Cytochrome P450 monooxygenase; part of the gene cluster that mediates the biosynthesis of sterigmatocystin (ST), a polyketide-derived furanocoumarin which is part of the most toxic and carcinogenic compounds among the known mycotoxins (PubMed:10618248, PubMed:8643646). The first step in the biosynthesis of sterigmatocystin is the production of hexanoate by the fatty acid synthase (FAS) units stcJ and stcK (PubMed:8962148). The polyketide backbone is assembled by the non-reducing polyketide synthase stcA by condensation of the starter hexanoyl-CoA and 7 malonyl-CoA extender units followed by cyclization and release of norsolorinic acid (By similarity). Norsolorinic acid is the first stable intermediate in the biosynthesis of sterigmatocystin and is converted into averantin (AVN) by the ketoreductase stcE which reduces the hexanoate ketone to an alcohol (Probable) (PubMed:8643646). Averantin is then oxidized into 5'-hydroxyaverantin (HAVN) by the cytochrome P450 monooxygenase stcF (PubMed:10618248). 5'-hydroxyaverantin is further converted to 5'-oxyaverantin (OAVN) by the 5'-hydroxyaverantin dehydrogenase stcG (PubMed:24957370). The next step is the conversion of OAVN into averufin (AVF) which is catalyzed by a yet to be identified enzyme (PubMed:24957370). The cytochrome P450 monooxygenase stcB and the flavin-binding monooxygenase stcW are both required for the conversion of averufin to 1-hydroxyversicolorone (PubMed:10618248). The esterase stcI probably catalyzes the formation of versiconal hemiacetal acetate from 1-hydroxyversicolorone (PubMed:24957370). The oxydoreductase stcN then probably catalyzes the biosynthetic step from versiconal to versicolorin B (VERB) (PubMed:24957370). The next step is performed by the versicolorin B desaturase stcL to produce versicolorin A (VERA) (PubMed:8999832). The ketoreductase stcU and the cytochrome P450 monooxygenase stcS are involved in the conversion of versicolorin A to demethylsterigmatocystin (PubMed:7486998). The Baeyer-Villiger oxidas stcQ and the reductase stcR might be involved in the biosynthetic step from versicolorin A to demethylsterigmatocystin (PubMed:24957370). The final step in the biosynthesis of sterigmatocystin is the methylation of demethylsterigmatocystin catalyzed by the methyltransferase stcP (PubMed:8900026).</text>
</comment>
<comment type="cofactor">
    <cofactor evidence="1">
        <name>heme</name>
        <dbReference type="ChEBI" id="CHEBI:30413"/>
    </cofactor>
</comment>
<comment type="pathway">
    <text evidence="3 6">Mycotoxin biosynthesis; sterigmatocystin biosynthesis.</text>
</comment>
<comment type="induction">
    <text evidence="5 6 10">The genes forming the sterigmatocystin biosynthesis cluster are co-regulated and induced on oatmeal porridge or the fungal isolates were grown either on oatmeal porridge or in YEC medium (0.2% yeast extract, 5.0% corn steep liquor) (PubMed:8017929, PubMed:8643646). Expression is positively regulated by the cluster-specific transcription factor aflR that binds the palindromic sequence 5'-TCG(N5)CGA-3'found in the promoter (PubMed:9680223).</text>
</comment>
<comment type="disruption phenotype">
    <text evidence="3">Impairs the production of sterigmatocystin and leads to the accumulation of averufin.</text>
</comment>
<comment type="similarity">
    <text evidence="13">Belongs to the cytochrome P450 family.</text>
</comment>
<comment type="sequence caution" evidence="13">
    <conflict type="erroneous gene model prediction">
        <sequence resource="EMBL-CDS" id="AAC49192"/>
    </conflict>
</comment>
<gene>
    <name evidence="12" type="primary">stcB</name>
    <name type="synonym">cyp62</name>
    <name type="ORF">AN7824</name>
</gene>
<name>STCB_EMENI</name>
<organism>
    <name type="scientific">Emericella nidulans (strain FGSC A4 / ATCC 38163 / CBS 112.46 / NRRL 194 / M139)</name>
    <name type="common">Aspergillus nidulans</name>
    <dbReference type="NCBI Taxonomy" id="227321"/>
    <lineage>
        <taxon>Eukaryota</taxon>
        <taxon>Fungi</taxon>
        <taxon>Dikarya</taxon>
        <taxon>Ascomycota</taxon>
        <taxon>Pezizomycotina</taxon>
        <taxon>Eurotiomycetes</taxon>
        <taxon>Eurotiomycetidae</taxon>
        <taxon>Eurotiales</taxon>
        <taxon>Aspergillaceae</taxon>
        <taxon>Aspergillus</taxon>
        <taxon>Aspergillus subgen. Nidulantes</taxon>
    </lineage>
</organism>
<protein>
    <recommendedName>
        <fullName evidence="12">Cytochrome P450 monooxygenase stcB</fullName>
        <ecNumber evidence="14">1.14.-.-</ecNumber>
    </recommendedName>
    <alternativeName>
        <fullName>Cytochrome P450 62</fullName>
    </alternativeName>
    <alternativeName>
        <fullName evidence="12">Sterigmatocystin biosynthesis cluster protein B</fullName>
    </alternativeName>
</protein>
<keyword id="KW-0349">Heme</keyword>
<keyword id="KW-0408">Iron</keyword>
<keyword id="KW-0479">Metal-binding</keyword>
<keyword id="KW-0503">Monooxygenase</keyword>
<keyword id="KW-0560">Oxidoreductase</keyword>
<keyword id="KW-1185">Reference proteome</keyword>
<keyword id="KW-0843">Virulence</keyword>
<proteinExistence type="evidence at transcript level"/>
<accession>Q12608</accession>
<accession>C8VDU8</accession>
<accession>Q5AV56</accession>
<feature type="chain" id="PRO_0000052051" description="Cytochrome P450 monooxygenase stcB">
    <location>
        <begin position="1"/>
        <end position="517"/>
    </location>
</feature>
<feature type="binding site" description="axial binding residue" evidence="1">
    <location>
        <position position="461"/>
    </location>
    <ligand>
        <name>heme</name>
        <dbReference type="ChEBI" id="CHEBI:30413"/>
    </ligand>
    <ligandPart>
        <name>Fe</name>
        <dbReference type="ChEBI" id="CHEBI:18248"/>
    </ligandPart>
</feature>